<sequence length="505" mass="54108">MFALRAASKADKNLLPFLGQLSRSHAAKAAKAAAAANGKIVAVIGAVVDVQFDDNLPPILNALEVDNRSPRLVLEVAQHLGENTVRTIAMDGTEGLVRGQKVLDTGYPIRIPVGAETLGRIINVIGEPIDERGPIDTDKTAAIHAEAPEFVQMSVEQEILVTGIKVVDLLAPYAKGGKIGLFGGAGVGKTVLIMELINNVAKAHGGYSVFAGVGERTREGNDLYNEMIEGGVISLKDKTSKVALVYGQMNEPPGARARVALTGLTVAEYFRDQEGQDVLLFIDNIFRFTQAGSEVSALLGRIPSAVGYQPTLATDMGSMQERITTTKKGSITSVQAIYVPADDLTDPAPATTFAHLDATTVLSRAIAELGIYPAVDPLDSTSRIMDPNIIGQEHYNVARGVQKILQDYKSLQDIIAILGMDELSEEDKLTVARARKIQRFLSQPFQVAEVFTGHAGKLVPLEQTIKGFSAILAGDYDHLPEVAFYMVGPIEEVVEKADRLAKEAA</sequence>
<reference key="1">
    <citation type="journal article" date="1993" name="Biochem. Biophys. Res. Commun.">
        <title>The beta subunit of the Drosophila melanogaster ATP synthase: cDNA cloning, amino acid analysis and identification of the protein in adult flies.</title>
        <authorList>
            <person name="Pena P."/>
            <person name="Garesse R."/>
        </authorList>
    </citation>
    <scope>NUCLEOTIDE SEQUENCE [MRNA] OF 6-505</scope>
</reference>
<reference key="2">
    <citation type="journal article" date="1999" name="Mol. Gen. Genet.">
        <title>Identification of nuclear genes encoding mitochondrial proteins: isolation of a collection of D. melanogaster cDNAs homologous to sequences in the Human Gene Index database.</title>
        <authorList>
            <person name="Caggese C."/>
            <person name="Ragone G."/>
            <person name="Perrini B."/>
            <person name="Moschetti R."/>
            <person name="de Pinto V."/>
            <person name="Caizzi R."/>
            <person name="Barsanti P."/>
        </authorList>
    </citation>
    <scope>NUCLEOTIDE SEQUENCE [MRNA]</scope>
    <source>
        <tissue>Ovary</tissue>
    </source>
</reference>
<reference key="3">
    <citation type="journal article" date="2000" name="Science">
        <title>The genome sequence of Drosophila melanogaster.</title>
        <authorList>
            <person name="Adams M.D."/>
            <person name="Celniker S.E."/>
            <person name="Holt R.A."/>
            <person name="Evans C.A."/>
            <person name="Gocayne J.D."/>
            <person name="Amanatides P.G."/>
            <person name="Scherer S.E."/>
            <person name="Li P.W."/>
            <person name="Hoskins R.A."/>
            <person name="Galle R.F."/>
            <person name="George R.A."/>
            <person name="Lewis S.E."/>
            <person name="Richards S."/>
            <person name="Ashburner M."/>
            <person name="Henderson S.N."/>
            <person name="Sutton G.G."/>
            <person name="Wortman J.R."/>
            <person name="Yandell M.D."/>
            <person name="Zhang Q."/>
            <person name="Chen L.X."/>
            <person name="Brandon R.C."/>
            <person name="Rogers Y.-H.C."/>
            <person name="Blazej R.G."/>
            <person name="Champe M."/>
            <person name="Pfeiffer B.D."/>
            <person name="Wan K.H."/>
            <person name="Doyle C."/>
            <person name="Baxter E.G."/>
            <person name="Helt G."/>
            <person name="Nelson C.R."/>
            <person name="Miklos G.L.G."/>
            <person name="Abril J.F."/>
            <person name="Agbayani A."/>
            <person name="An H.-J."/>
            <person name="Andrews-Pfannkoch C."/>
            <person name="Baldwin D."/>
            <person name="Ballew R.M."/>
            <person name="Basu A."/>
            <person name="Baxendale J."/>
            <person name="Bayraktaroglu L."/>
            <person name="Beasley E.M."/>
            <person name="Beeson K.Y."/>
            <person name="Benos P.V."/>
            <person name="Berman B.P."/>
            <person name="Bhandari D."/>
            <person name="Bolshakov S."/>
            <person name="Borkova D."/>
            <person name="Botchan M.R."/>
            <person name="Bouck J."/>
            <person name="Brokstein P."/>
            <person name="Brottier P."/>
            <person name="Burtis K.C."/>
            <person name="Busam D.A."/>
            <person name="Butler H."/>
            <person name="Cadieu E."/>
            <person name="Center A."/>
            <person name="Chandra I."/>
            <person name="Cherry J.M."/>
            <person name="Cawley S."/>
            <person name="Dahlke C."/>
            <person name="Davenport L.B."/>
            <person name="Davies P."/>
            <person name="de Pablos B."/>
            <person name="Delcher A."/>
            <person name="Deng Z."/>
            <person name="Mays A.D."/>
            <person name="Dew I."/>
            <person name="Dietz S.M."/>
            <person name="Dodson K."/>
            <person name="Doup L.E."/>
            <person name="Downes M."/>
            <person name="Dugan-Rocha S."/>
            <person name="Dunkov B.C."/>
            <person name="Dunn P."/>
            <person name="Durbin K.J."/>
            <person name="Evangelista C.C."/>
            <person name="Ferraz C."/>
            <person name="Ferriera S."/>
            <person name="Fleischmann W."/>
            <person name="Fosler C."/>
            <person name="Gabrielian A.E."/>
            <person name="Garg N.S."/>
            <person name="Gelbart W.M."/>
            <person name="Glasser K."/>
            <person name="Glodek A."/>
            <person name="Gong F."/>
            <person name="Gorrell J.H."/>
            <person name="Gu Z."/>
            <person name="Guan P."/>
            <person name="Harris M."/>
            <person name="Harris N.L."/>
            <person name="Harvey D.A."/>
            <person name="Heiman T.J."/>
            <person name="Hernandez J.R."/>
            <person name="Houck J."/>
            <person name="Hostin D."/>
            <person name="Houston K.A."/>
            <person name="Howland T.J."/>
            <person name="Wei M.-H."/>
            <person name="Ibegwam C."/>
            <person name="Jalali M."/>
            <person name="Kalush F."/>
            <person name="Karpen G.H."/>
            <person name="Ke Z."/>
            <person name="Kennison J.A."/>
            <person name="Ketchum K.A."/>
            <person name="Kimmel B.E."/>
            <person name="Kodira C.D."/>
            <person name="Kraft C.L."/>
            <person name="Kravitz S."/>
            <person name="Kulp D."/>
            <person name="Lai Z."/>
            <person name="Lasko P."/>
            <person name="Lei Y."/>
            <person name="Levitsky A.A."/>
            <person name="Li J.H."/>
            <person name="Li Z."/>
            <person name="Liang Y."/>
            <person name="Lin X."/>
            <person name="Liu X."/>
            <person name="Mattei B."/>
            <person name="McIntosh T.C."/>
            <person name="McLeod M.P."/>
            <person name="McPherson D."/>
            <person name="Merkulov G."/>
            <person name="Milshina N.V."/>
            <person name="Mobarry C."/>
            <person name="Morris J."/>
            <person name="Moshrefi A."/>
            <person name="Mount S.M."/>
            <person name="Moy M."/>
            <person name="Murphy B."/>
            <person name="Murphy L."/>
            <person name="Muzny D.M."/>
            <person name="Nelson D.L."/>
            <person name="Nelson D.R."/>
            <person name="Nelson K.A."/>
            <person name="Nixon K."/>
            <person name="Nusskern D.R."/>
            <person name="Pacleb J.M."/>
            <person name="Palazzolo M."/>
            <person name="Pittman G.S."/>
            <person name="Pan S."/>
            <person name="Pollard J."/>
            <person name="Puri V."/>
            <person name="Reese M.G."/>
            <person name="Reinert K."/>
            <person name="Remington K."/>
            <person name="Saunders R.D.C."/>
            <person name="Scheeler F."/>
            <person name="Shen H."/>
            <person name="Shue B.C."/>
            <person name="Siden-Kiamos I."/>
            <person name="Simpson M."/>
            <person name="Skupski M.P."/>
            <person name="Smith T.J."/>
            <person name="Spier E."/>
            <person name="Spradling A.C."/>
            <person name="Stapleton M."/>
            <person name="Strong R."/>
            <person name="Sun E."/>
            <person name="Svirskas R."/>
            <person name="Tector C."/>
            <person name="Turner R."/>
            <person name="Venter E."/>
            <person name="Wang A.H."/>
            <person name="Wang X."/>
            <person name="Wang Z.-Y."/>
            <person name="Wassarman D.A."/>
            <person name="Weinstock G.M."/>
            <person name="Weissenbach J."/>
            <person name="Williams S.M."/>
            <person name="Woodage T."/>
            <person name="Worley K.C."/>
            <person name="Wu D."/>
            <person name="Yang S."/>
            <person name="Yao Q.A."/>
            <person name="Ye J."/>
            <person name="Yeh R.-F."/>
            <person name="Zaveri J.S."/>
            <person name="Zhan M."/>
            <person name="Zhang G."/>
            <person name="Zhao Q."/>
            <person name="Zheng L."/>
            <person name="Zheng X.H."/>
            <person name="Zhong F.N."/>
            <person name="Zhong W."/>
            <person name="Zhou X."/>
            <person name="Zhu S.C."/>
            <person name="Zhu X."/>
            <person name="Smith H.O."/>
            <person name="Gibbs R.A."/>
            <person name="Myers E.W."/>
            <person name="Rubin G.M."/>
            <person name="Venter J.C."/>
        </authorList>
    </citation>
    <scope>NUCLEOTIDE SEQUENCE [LARGE SCALE GENOMIC DNA]</scope>
    <source>
        <strain>Berkeley</strain>
    </source>
</reference>
<reference key="4">
    <citation type="journal article" date="2002" name="Genome Biol.">
        <title>Annotation of the Drosophila melanogaster euchromatic genome: a systematic review.</title>
        <authorList>
            <person name="Misra S."/>
            <person name="Crosby M.A."/>
            <person name="Mungall C.J."/>
            <person name="Matthews B.B."/>
            <person name="Campbell K.S."/>
            <person name="Hradecky P."/>
            <person name="Huang Y."/>
            <person name="Kaminker J.S."/>
            <person name="Millburn G.H."/>
            <person name="Prochnik S.E."/>
            <person name="Smith C.D."/>
            <person name="Tupy J.L."/>
            <person name="Whitfield E.J."/>
            <person name="Bayraktaroglu L."/>
            <person name="Berman B.P."/>
            <person name="Bettencourt B.R."/>
            <person name="Celniker S.E."/>
            <person name="de Grey A.D.N.J."/>
            <person name="Drysdale R.A."/>
            <person name="Harris N.L."/>
            <person name="Richter J."/>
            <person name="Russo S."/>
            <person name="Schroeder A.J."/>
            <person name="Shu S.Q."/>
            <person name="Stapleton M."/>
            <person name="Yamada C."/>
            <person name="Ashburner M."/>
            <person name="Gelbart W.M."/>
            <person name="Rubin G.M."/>
            <person name="Lewis S.E."/>
        </authorList>
    </citation>
    <scope>GENOME REANNOTATION</scope>
    <source>
        <strain>Berkeley</strain>
    </source>
</reference>
<reference key="5">
    <citation type="journal article" date="2002" name="Genome Biol.">
        <title>A Drosophila full-length cDNA resource.</title>
        <authorList>
            <person name="Stapleton M."/>
            <person name="Carlson J.W."/>
            <person name="Brokstein P."/>
            <person name="Yu C."/>
            <person name="Champe M."/>
            <person name="George R.A."/>
            <person name="Guarin H."/>
            <person name="Kronmiller B."/>
            <person name="Pacleb J.M."/>
            <person name="Park S."/>
            <person name="Wan K.H."/>
            <person name="Rubin G.M."/>
            <person name="Celniker S.E."/>
        </authorList>
    </citation>
    <scope>NUCLEOTIDE SEQUENCE [LARGE SCALE MRNA]</scope>
    <source>
        <strain>Berkeley</strain>
        <tissue>Embryo</tissue>
    </source>
</reference>
<keyword id="KW-0066">ATP synthesis</keyword>
<keyword id="KW-0067">ATP-binding</keyword>
<keyword id="KW-0139">CF(1)</keyword>
<keyword id="KW-0375">Hydrogen ion transport</keyword>
<keyword id="KW-0406">Ion transport</keyword>
<keyword id="KW-0472">Membrane</keyword>
<keyword id="KW-0496">Mitochondrion</keyword>
<keyword id="KW-0999">Mitochondrion inner membrane</keyword>
<keyword id="KW-0547">Nucleotide-binding</keyword>
<keyword id="KW-1185">Reference proteome</keyword>
<keyword id="KW-0809">Transit peptide</keyword>
<keyword id="KW-1278">Translocase</keyword>
<keyword id="KW-0813">Transport</keyword>
<proteinExistence type="evidence at protein level"/>
<accession>Q05825</accession>
<accession>Q9V494</accession>
<organism>
    <name type="scientific">Drosophila melanogaster</name>
    <name type="common">Fruit fly</name>
    <dbReference type="NCBI Taxonomy" id="7227"/>
    <lineage>
        <taxon>Eukaryota</taxon>
        <taxon>Metazoa</taxon>
        <taxon>Ecdysozoa</taxon>
        <taxon>Arthropoda</taxon>
        <taxon>Hexapoda</taxon>
        <taxon>Insecta</taxon>
        <taxon>Pterygota</taxon>
        <taxon>Neoptera</taxon>
        <taxon>Endopterygota</taxon>
        <taxon>Diptera</taxon>
        <taxon>Brachycera</taxon>
        <taxon>Muscomorpha</taxon>
        <taxon>Ephydroidea</taxon>
        <taxon>Drosophilidae</taxon>
        <taxon>Drosophila</taxon>
        <taxon>Sophophora</taxon>
    </lineage>
</organism>
<gene>
    <name evidence="4" type="primary">ATPsynbeta</name>
    <name evidence="4" type="synonym">ATPsyn-beta</name>
    <name evidence="4" type="ORF">CG11154</name>
</gene>
<dbReference type="EC" id="7.1.2.2"/>
<dbReference type="EMBL" id="X71013">
    <property type="protein sequence ID" value="CAA50332.1"/>
    <property type="molecule type" value="mRNA"/>
</dbReference>
<dbReference type="EMBL" id="AE014135">
    <property type="protein sequence ID" value="AAF59391.1"/>
    <property type="molecule type" value="Genomic_DNA"/>
</dbReference>
<dbReference type="EMBL" id="AY118367">
    <property type="protein sequence ID" value="AAM48396.1"/>
    <property type="molecule type" value="mRNA"/>
</dbReference>
<dbReference type="PIR" id="JN0760">
    <property type="entry name" value="JN0760"/>
</dbReference>
<dbReference type="RefSeq" id="NP_001284719.1">
    <property type="nucleotide sequence ID" value="NM_001297790.1"/>
</dbReference>
<dbReference type="RefSeq" id="NP_726631.1">
    <property type="nucleotide sequence ID" value="NM_166808.3"/>
</dbReference>
<dbReference type="SMR" id="Q05825"/>
<dbReference type="BioGRID" id="68655">
    <property type="interactions" value="74"/>
</dbReference>
<dbReference type="ComplexPortal" id="CPX-8618">
    <property type="entry name" value="Mitochondrial proton-transporting ATP synthase complex"/>
</dbReference>
<dbReference type="FunCoup" id="Q05825">
    <property type="interactions" value="894"/>
</dbReference>
<dbReference type="IntAct" id="Q05825">
    <property type="interactions" value="61"/>
</dbReference>
<dbReference type="MINT" id="Q05825"/>
<dbReference type="STRING" id="7227.FBpp0305828"/>
<dbReference type="PaxDb" id="7227-FBpp0305828"/>
<dbReference type="DNASU" id="43829"/>
<dbReference type="EnsemblMetazoa" id="FBtr0089186">
    <property type="protein sequence ID" value="FBpp0088250"/>
    <property type="gene ID" value="FBgn0010217"/>
</dbReference>
<dbReference type="EnsemblMetazoa" id="FBtr0344754">
    <property type="protein sequence ID" value="FBpp0311086"/>
    <property type="gene ID" value="FBgn0010217"/>
</dbReference>
<dbReference type="GeneID" id="43829"/>
<dbReference type="KEGG" id="dme:Dmel_CG11154"/>
<dbReference type="AGR" id="FB:FBgn0010217"/>
<dbReference type="CTD" id="43829"/>
<dbReference type="FlyBase" id="FBgn0010217">
    <property type="gene designation" value="ATPsynbeta"/>
</dbReference>
<dbReference type="VEuPathDB" id="VectorBase:FBgn0010217"/>
<dbReference type="eggNOG" id="KOG1350">
    <property type="taxonomic scope" value="Eukaryota"/>
</dbReference>
<dbReference type="HOGENOM" id="CLU_022398_0_2_1"/>
<dbReference type="InParanoid" id="Q05825"/>
<dbReference type="OrthoDB" id="14523at2759"/>
<dbReference type="PhylomeDB" id="Q05825"/>
<dbReference type="Reactome" id="R-DME-1268020">
    <property type="pathway name" value="Mitochondrial protein import"/>
</dbReference>
<dbReference type="Reactome" id="R-DME-163210">
    <property type="pathway name" value="Formation of ATP by chemiosmotic coupling"/>
</dbReference>
<dbReference type="Reactome" id="R-DME-8949613">
    <property type="pathway name" value="Cristae formation"/>
</dbReference>
<dbReference type="Reactome" id="R-DME-9837999">
    <property type="pathway name" value="Mitochondrial protein degradation"/>
</dbReference>
<dbReference type="SignaLink" id="Q05825"/>
<dbReference type="BioGRID-ORCS" id="43829">
    <property type="hits" value="1 hit in 1 CRISPR screen"/>
</dbReference>
<dbReference type="ChiTaRS" id="ATPsynbeta">
    <property type="organism name" value="fly"/>
</dbReference>
<dbReference type="GenomeRNAi" id="43829"/>
<dbReference type="PRO" id="PR:Q05825"/>
<dbReference type="Proteomes" id="UP000000803">
    <property type="component" value="Chromosome 4"/>
</dbReference>
<dbReference type="Bgee" id="FBgn0010217">
    <property type="expression patterns" value="Expressed in adult antennal lobe projection neuron adPN (Drosophila) in brain and 290 other cell types or tissues"/>
</dbReference>
<dbReference type="ExpressionAtlas" id="Q05825">
    <property type="expression patterns" value="baseline and differential"/>
</dbReference>
<dbReference type="GO" id="GO:0005743">
    <property type="term" value="C:mitochondrial inner membrane"/>
    <property type="evidence" value="ECO:0000250"/>
    <property type="project" value="FlyBase"/>
</dbReference>
<dbReference type="GO" id="GO:0005739">
    <property type="term" value="C:mitochondrion"/>
    <property type="evidence" value="ECO:0007005"/>
    <property type="project" value="FlyBase"/>
</dbReference>
<dbReference type="GO" id="GO:0045259">
    <property type="term" value="C:proton-transporting ATP synthase complex"/>
    <property type="evidence" value="ECO:0000250"/>
    <property type="project" value="FlyBase"/>
</dbReference>
<dbReference type="GO" id="GO:0005524">
    <property type="term" value="F:ATP binding"/>
    <property type="evidence" value="ECO:0007669"/>
    <property type="project" value="UniProtKB-KW"/>
</dbReference>
<dbReference type="GO" id="GO:0016887">
    <property type="term" value="F:ATP hydrolysis activity"/>
    <property type="evidence" value="ECO:0007669"/>
    <property type="project" value="InterPro"/>
</dbReference>
<dbReference type="GO" id="GO:0046933">
    <property type="term" value="F:proton-transporting ATP synthase activity, rotational mechanism"/>
    <property type="evidence" value="ECO:0007669"/>
    <property type="project" value="InterPro"/>
</dbReference>
<dbReference type="GO" id="GO:0015986">
    <property type="term" value="P:proton motive force-driven ATP synthesis"/>
    <property type="evidence" value="ECO:0000250"/>
    <property type="project" value="FlyBase"/>
</dbReference>
<dbReference type="GO" id="GO:0042776">
    <property type="term" value="P:proton motive force-driven mitochondrial ATP synthesis"/>
    <property type="evidence" value="ECO:0000318"/>
    <property type="project" value="GO_Central"/>
</dbReference>
<dbReference type="CDD" id="cd18110">
    <property type="entry name" value="ATP-synt_F1_beta_C"/>
    <property type="match status" value="1"/>
</dbReference>
<dbReference type="CDD" id="cd18115">
    <property type="entry name" value="ATP-synt_F1_beta_N"/>
    <property type="match status" value="1"/>
</dbReference>
<dbReference type="CDD" id="cd01133">
    <property type="entry name" value="F1-ATPase_beta_CD"/>
    <property type="match status" value="1"/>
</dbReference>
<dbReference type="FunFam" id="1.10.1140.10:FF:000001">
    <property type="entry name" value="ATP synthase subunit beta"/>
    <property type="match status" value="1"/>
</dbReference>
<dbReference type="FunFam" id="2.40.10.170:FF:000004">
    <property type="entry name" value="ATP synthase subunit beta"/>
    <property type="match status" value="1"/>
</dbReference>
<dbReference type="FunFam" id="3.40.50.12240:FF:000006">
    <property type="entry name" value="ATP synthase subunit beta"/>
    <property type="match status" value="1"/>
</dbReference>
<dbReference type="FunFam" id="3.40.50.300:FF:000026">
    <property type="entry name" value="ATP synthase subunit beta"/>
    <property type="match status" value="1"/>
</dbReference>
<dbReference type="Gene3D" id="2.40.10.170">
    <property type="match status" value="1"/>
</dbReference>
<dbReference type="Gene3D" id="1.10.1140.10">
    <property type="entry name" value="Bovine Mitochondrial F1-atpase, Atp Synthase Beta Chain, Chain D, domain 3"/>
    <property type="match status" value="1"/>
</dbReference>
<dbReference type="Gene3D" id="3.40.50.300">
    <property type="entry name" value="P-loop containing nucleotide triphosphate hydrolases"/>
    <property type="match status" value="1"/>
</dbReference>
<dbReference type="HAMAP" id="MF_01347">
    <property type="entry name" value="ATP_synth_beta_bact"/>
    <property type="match status" value="1"/>
</dbReference>
<dbReference type="InterPro" id="IPR003593">
    <property type="entry name" value="AAA+_ATPase"/>
</dbReference>
<dbReference type="InterPro" id="IPR055190">
    <property type="entry name" value="ATP-synt_VA_C"/>
</dbReference>
<dbReference type="InterPro" id="IPR005722">
    <property type="entry name" value="ATP_synth_F1_bsu"/>
</dbReference>
<dbReference type="InterPro" id="IPR020003">
    <property type="entry name" value="ATPase_a/bsu_AS"/>
</dbReference>
<dbReference type="InterPro" id="IPR050053">
    <property type="entry name" value="ATPase_alpha/beta_chains"/>
</dbReference>
<dbReference type="InterPro" id="IPR004100">
    <property type="entry name" value="ATPase_F1/V1/A1_a/bsu_N"/>
</dbReference>
<dbReference type="InterPro" id="IPR036121">
    <property type="entry name" value="ATPase_F1/V1/A1_a/bsu_N_sf"/>
</dbReference>
<dbReference type="InterPro" id="IPR000194">
    <property type="entry name" value="ATPase_F1/V1/A1_a/bsu_nucl-bd"/>
</dbReference>
<dbReference type="InterPro" id="IPR024034">
    <property type="entry name" value="ATPase_F1/V1_b/a_C"/>
</dbReference>
<dbReference type="InterPro" id="IPR027417">
    <property type="entry name" value="P-loop_NTPase"/>
</dbReference>
<dbReference type="NCBIfam" id="TIGR01039">
    <property type="entry name" value="atpD"/>
    <property type="match status" value="1"/>
</dbReference>
<dbReference type="PANTHER" id="PTHR15184">
    <property type="entry name" value="ATP SYNTHASE"/>
    <property type="match status" value="1"/>
</dbReference>
<dbReference type="PANTHER" id="PTHR15184:SF71">
    <property type="entry name" value="ATP SYNTHASE SUBUNIT BETA, MITOCHONDRIAL"/>
    <property type="match status" value="1"/>
</dbReference>
<dbReference type="Pfam" id="PF00006">
    <property type="entry name" value="ATP-synt_ab"/>
    <property type="match status" value="1"/>
</dbReference>
<dbReference type="Pfam" id="PF02874">
    <property type="entry name" value="ATP-synt_ab_N"/>
    <property type="match status" value="1"/>
</dbReference>
<dbReference type="Pfam" id="PF22919">
    <property type="entry name" value="ATP-synt_VA_C"/>
    <property type="match status" value="1"/>
</dbReference>
<dbReference type="PIRSF" id="PIRSF039072">
    <property type="entry name" value="ATPase_subunit_beta"/>
    <property type="match status" value="1"/>
</dbReference>
<dbReference type="SMART" id="SM00382">
    <property type="entry name" value="AAA"/>
    <property type="match status" value="1"/>
</dbReference>
<dbReference type="SUPFAM" id="SSF47917">
    <property type="entry name" value="C-terminal domain of alpha and beta subunits of F1 ATP synthase"/>
    <property type="match status" value="1"/>
</dbReference>
<dbReference type="SUPFAM" id="SSF50615">
    <property type="entry name" value="N-terminal domain of alpha and beta subunits of F1 ATP synthase"/>
    <property type="match status" value="1"/>
</dbReference>
<dbReference type="SUPFAM" id="SSF52540">
    <property type="entry name" value="P-loop containing nucleoside triphosphate hydrolases"/>
    <property type="match status" value="1"/>
</dbReference>
<dbReference type="PROSITE" id="PS00152">
    <property type="entry name" value="ATPASE_ALPHA_BETA"/>
    <property type="match status" value="1"/>
</dbReference>
<feature type="transit peptide" description="Mitochondrion" evidence="2">
    <location>
        <begin position="1"/>
        <end position="31"/>
    </location>
</feature>
<feature type="chain" id="PRO_0000002448" description="ATP synthase subunit beta, mitochondrial">
    <location>
        <begin position="32"/>
        <end position="505"/>
    </location>
</feature>
<feature type="binding site" evidence="1">
    <location>
        <begin position="183"/>
        <end position="190"/>
    </location>
    <ligand>
        <name>ATP</name>
        <dbReference type="ChEBI" id="CHEBI:30616"/>
    </ligand>
</feature>
<feature type="sequence conflict" description="In Ref. 1; CAA50332." evidence="3" ref="1">
    <original>VE</original>
    <variation>CR</variation>
    <location>
        <begin position="494"/>
        <end position="495"/>
    </location>
</feature>
<evidence type="ECO:0000250" key="1"/>
<evidence type="ECO:0000255" key="2"/>
<evidence type="ECO:0000305" key="3"/>
<evidence type="ECO:0000312" key="4">
    <source>
        <dbReference type="FlyBase" id="FBgn0010217"/>
    </source>
</evidence>
<name>ATPB_DROME</name>
<protein>
    <recommendedName>
        <fullName>ATP synthase subunit beta, mitochondrial</fullName>
        <ecNumber>7.1.2.2</ecNumber>
    </recommendedName>
</protein>
<comment type="function">
    <text>Mitochondrial membrane ATP synthase (F(1)F(0) ATP synthase or Complex V) produces ATP from ADP in the presence of a proton gradient across the membrane which is generated by electron transport complexes of the respiratory chain. F-type ATPases consist of two structural domains, F(1) - containing the extramembraneous catalytic core, and F(0) - containing the membrane proton channel, linked together by a central stalk and a peripheral stalk. During catalysis, ATP synthesis in the catalytic domain of F(1) is coupled via a rotary mechanism of the central stalk subunits to proton translocation. Subunits alpha and beta form the catalytic core in F(1). Rotation of the central stalk against the surrounding alpha(3)beta(3) subunits leads to hydrolysis of ATP in three separate catalytic sites on the beta subunits.</text>
</comment>
<comment type="catalytic activity">
    <reaction>
        <text>ATP + H2O + 4 H(+)(in) = ADP + phosphate + 5 H(+)(out)</text>
        <dbReference type="Rhea" id="RHEA:57720"/>
        <dbReference type="ChEBI" id="CHEBI:15377"/>
        <dbReference type="ChEBI" id="CHEBI:15378"/>
        <dbReference type="ChEBI" id="CHEBI:30616"/>
        <dbReference type="ChEBI" id="CHEBI:43474"/>
        <dbReference type="ChEBI" id="CHEBI:456216"/>
        <dbReference type="EC" id="7.1.2.2"/>
    </reaction>
</comment>
<comment type="subunit">
    <text>F-type ATPases have 2 components, CF(1) - the catalytic core - and CF(0) - the membrane proton channel. CF(1) has five subunits: alpha(3), beta(3), gamma(1), delta(1), epsilon(1). CF(0) has three main subunits: a, b and c.</text>
</comment>
<comment type="interaction">
    <interactant intactId="EBI-86574">
        <id>Q05825</id>
    </interactant>
    <interactant intactId="EBI-173806">
        <id>Q9VES8</id>
        <label>anon2A5</label>
    </interactant>
    <organismsDiffer>false</organismsDiffer>
    <experiments>3</experiments>
</comment>
<comment type="subcellular location">
    <subcellularLocation>
        <location>Mitochondrion</location>
    </subcellularLocation>
    <subcellularLocation>
        <location>Mitochondrion inner membrane</location>
    </subcellularLocation>
    <text>Peripheral membrane protein.</text>
</comment>
<comment type="similarity">
    <text evidence="3">Belongs to the ATPase alpha/beta chains family.</text>
</comment>